<proteinExistence type="inferred from homology"/>
<reference key="1">
    <citation type="journal article" date="2005" name="Nature">
        <title>Initial sequence of the chimpanzee genome and comparison with the human genome.</title>
        <authorList>
            <consortium name="Chimpanzee sequencing and analysis consortium"/>
        </authorList>
    </citation>
    <scope>NUCLEOTIDE SEQUENCE [LARGE SCALE GENOMIC DNA]</scope>
</reference>
<reference key="2">
    <citation type="journal article" date="2005" name="Genetics">
        <title>Comparative genomics and diversifying selection of the clustered vertebrate protocadherin genes.</title>
        <authorList>
            <person name="Wu Q."/>
        </authorList>
    </citation>
    <scope>IDENTIFICATION</scope>
</reference>
<feature type="signal peptide" evidence="2">
    <location>
        <begin position="1"/>
        <end position="26"/>
    </location>
</feature>
<feature type="chain" id="PRO_0000003935" description="Protocadherin beta-11">
    <location>
        <begin position="27"/>
        <end position="797"/>
    </location>
</feature>
<feature type="topological domain" description="Extracellular" evidence="2">
    <location>
        <begin position="27"/>
        <end position="690"/>
    </location>
</feature>
<feature type="transmembrane region" description="Helical" evidence="2">
    <location>
        <begin position="691"/>
        <end position="711"/>
    </location>
</feature>
<feature type="topological domain" description="Cytoplasmic" evidence="2">
    <location>
        <begin position="712"/>
        <end position="797"/>
    </location>
</feature>
<feature type="domain" description="Cadherin 1" evidence="3">
    <location>
        <begin position="35"/>
        <end position="133"/>
    </location>
</feature>
<feature type="domain" description="Cadherin 2" evidence="3">
    <location>
        <begin position="138"/>
        <end position="242"/>
    </location>
</feature>
<feature type="domain" description="Cadherin 3" evidence="3">
    <location>
        <begin position="247"/>
        <end position="347"/>
    </location>
</feature>
<feature type="domain" description="Cadherin 4" evidence="3">
    <location>
        <begin position="352"/>
        <end position="451"/>
    </location>
</feature>
<feature type="domain" description="Cadherin 5" evidence="3">
    <location>
        <begin position="456"/>
        <end position="561"/>
    </location>
</feature>
<feature type="domain" description="Cadherin 6" evidence="3">
    <location>
        <begin position="568"/>
        <end position="671"/>
    </location>
</feature>
<feature type="glycosylation site" description="N-linked (GlcNAc...) asparagine" evidence="2">
    <location>
        <position position="418"/>
    </location>
</feature>
<feature type="glycosylation site" description="N-linked (GlcNAc...) asparagine" evidence="2">
    <location>
        <position position="436"/>
    </location>
</feature>
<feature type="glycosylation site" description="N-linked (GlcNAc...) asparagine" evidence="2">
    <location>
        <position position="487"/>
    </location>
</feature>
<feature type="glycosylation site" description="N-linked (GlcNAc...) asparagine" evidence="2">
    <location>
        <position position="567"/>
    </location>
</feature>
<gene>
    <name type="primary">PCDHB11</name>
</gene>
<dbReference type="FunCoup" id="Q5DRD8">
    <property type="interactions" value="55"/>
</dbReference>
<dbReference type="STRING" id="9598.ENSPTRP00000072484"/>
<dbReference type="GlyCosmos" id="Q5DRD8">
    <property type="glycosylation" value="4 sites, No reported glycans"/>
</dbReference>
<dbReference type="PaxDb" id="9598-ENSPTRP00000047954"/>
<dbReference type="eggNOG" id="KOG3594">
    <property type="taxonomic scope" value="Eukaryota"/>
</dbReference>
<dbReference type="InParanoid" id="Q5DRD8"/>
<dbReference type="Proteomes" id="UP000002277">
    <property type="component" value="Unplaced"/>
</dbReference>
<dbReference type="GO" id="GO:0005886">
    <property type="term" value="C:plasma membrane"/>
    <property type="evidence" value="ECO:0000318"/>
    <property type="project" value="GO_Central"/>
</dbReference>
<dbReference type="GO" id="GO:0005509">
    <property type="term" value="F:calcium ion binding"/>
    <property type="evidence" value="ECO:0007669"/>
    <property type="project" value="InterPro"/>
</dbReference>
<dbReference type="GO" id="GO:0007155">
    <property type="term" value="P:cell adhesion"/>
    <property type="evidence" value="ECO:0000318"/>
    <property type="project" value="GO_Central"/>
</dbReference>
<dbReference type="GO" id="GO:0007156">
    <property type="term" value="P:homophilic cell adhesion via plasma membrane adhesion molecules"/>
    <property type="evidence" value="ECO:0007669"/>
    <property type="project" value="InterPro"/>
</dbReference>
<dbReference type="GO" id="GO:0007399">
    <property type="term" value="P:nervous system development"/>
    <property type="evidence" value="ECO:0007669"/>
    <property type="project" value="UniProtKB-ARBA"/>
</dbReference>
<dbReference type="CDD" id="cd11304">
    <property type="entry name" value="Cadherin_repeat"/>
    <property type="match status" value="5"/>
</dbReference>
<dbReference type="FunFam" id="2.60.40.60:FF:000001">
    <property type="entry name" value="Protocadherin alpha 2"/>
    <property type="match status" value="1"/>
</dbReference>
<dbReference type="FunFam" id="2.60.40.60:FF:000002">
    <property type="entry name" value="Protocadherin alpha 2"/>
    <property type="match status" value="1"/>
</dbReference>
<dbReference type="FunFam" id="2.60.40.60:FF:000006">
    <property type="entry name" value="Protocadherin alpha 2"/>
    <property type="match status" value="1"/>
</dbReference>
<dbReference type="FunFam" id="2.60.40.60:FF:000046">
    <property type="entry name" value="Protocadherin beta 5"/>
    <property type="match status" value="1"/>
</dbReference>
<dbReference type="FunFam" id="2.60.40.60:FF:000309">
    <property type="entry name" value="Protocadherin beta-8"/>
    <property type="match status" value="1"/>
</dbReference>
<dbReference type="FunFam" id="2.60.40.60:FF:000018">
    <property type="entry name" value="Protocadherin gamma c3"/>
    <property type="match status" value="1"/>
</dbReference>
<dbReference type="Gene3D" id="2.60.40.60">
    <property type="entry name" value="Cadherins"/>
    <property type="match status" value="6"/>
</dbReference>
<dbReference type="InterPro" id="IPR002126">
    <property type="entry name" value="Cadherin-like_dom"/>
</dbReference>
<dbReference type="InterPro" id="IPR015919">
    <property type="entry name" value="Cadherin-like_sf"/>
</dbReference>
<dbReference type="InterPro" id="IPR032455">
    <property type="entry name" value="Cadherin_C"/>
</dbReference>
<dbReference type="InterPro" id="IPR020894">
    <property type="entry name" value="Cadherin_CS"/>
</dbReference>
<dbReference type="InterPro" id="IPR013164">
    <property type="entry name" value="Cadherin_N"/>
</dbReference>
<dbReference type="InterPro" id="IPR050174">
    <property type="entry name" value="Protocadherin/Cadherin-CA"/>
</dbReference>
<dbReference type="PANTHER" id="PTHR24028">
    <property type="entry name" value="CADHERIN-87A"/>
    <property type="match status" value="1"/>
</dbReference>
<dbReference type="PANTHER" id="PTHR24028:SF286">
    <property type="entry name" value="PROTOCADHERIN BETA-11"/>
    <property type="match status" value="1"/>
</dbReference>
<dbReference type="Pfam" id="PF00028">
    <property type="entry name" value="Cadherin"/>
    <property type="match status" value="5"/>
</dbReference>
<dbReference type="Pfam" id="PF08266">
    <property type="entry name" value="Cadherin_2"/>
    <property type="match status" value="1"/>
</dbReference>
<dbReference type="Pfam" id="PF16492">
    <property type="entry name" value="Cadherin_C_2"/>
    <property type="match status" value="1"/>
</dbReference>
<dbReference type="PRINTS" id="PR00205">
    <property type="entry name" value="CADHERIN"/>
</dbReference>
<dbReference type="SMART" id="SM00112">
    <property type="entry name" value="CA"/>
    <property type="match status" value="6"/>
</dbReference>
<dbReference type="SUPFAM" id="SSF49313">
    <property type="entry name" value="Cadherin-like"/>
    <property type="match status" value="6"/>
</dbReference>
<dbReference type="PROSITE" id="PS00232">
    <property type="entry name" value="CADHERIN_1"/>
    <property type="match status" value="5"/>
</dbReference>
<dbReference type="PROSITE" id="PS50268">
    <property type="entry name" value="CADHERIN_2"/>
    <property type="match status" value="6"/>
</dbReference>
<comment type="function">
    <text>Potential calcium-dependent cell-adhesion protein. May be involved in the establishment and maintenance of specific neuronal connections in the brain.</text>
</comment>
<comment type="subcellular location">
    <subcellularLocation>
        <location evidence="1">Cell membrane</location>
        <topology evidence="1">Single-pass type I membrane protein</topology>
    </subcellularLocation>
</comment>
<organism>
    <name type="scientific">Pan troglodytes</name>
    <name type="common">Chimpanzee</name>
    <dbReference type="NCBI Taxonomy" id="9598"/>
    <lineage>
        <taxon>Eukaryota</taxon>
        <taxon>Metazoa</taxon>
        <taxon>Chordata</taxon>
        <taxon>Craniata</taxon>
        <taxon>Vertebrata</taxon>
        <taxon>Euteleostomi</taxon>
        <taxon>Mammalia</taxon>
        <taxon>Eutheria</taxon>
        <taxon>Euarchontoglires</taxon>
        <taxon>Primates</taxon>
        <taxon>Haplorrhini</taxon>
        <taxon>Catarrhini</taxon>
        <taxon>Hominidae</taxon>
        <taxon>Pan</taxon>
    </lineage>
</organism>
<keyword id="KW-0106">Calcium</keyword>
<keyword id="KW-0130">Cell adhesion</keyword>
<keyword id="KW-1003">Cell membrane</keyword>
<keyword id="KW-0325">Glycoprotein</keyword>
<keyword id="KW-0472">Membrane</keyword>
<keyword id="KW-1185">Reference proteome</keyword>
<keyword id="KW-0677">Repeat</keyword>
<keyword id="KW-0732">Signal</keyword>
<keyword id="KW-0812">Transmembrane</keyword>
<keyword id="KW-1133">Transmembrane helix</keyword>
<name>PCDBB_PANTR</name>
<evidence type="ECO:0000250" key="1"/>
<evidence type="ECO:0000255" key="2"/>
<evidence type="ECO:0000255" key="3">
    <source>
        <dbReference type="PROSITE-ProRule" id="PRU00043"/>
    </source>
</evidence>
<sequence length="797" mass="87079">MENGGTRTQQIRQVLLLFVLLGMSQAGSETWSFSVAEEMQSGSFVGNLAKDLGLKVRELSSRGARVVSNDKKQRLQLDINTGDVLLSETLDREELCGSIEPCVLHFQVLMQNPTQFLQIELQVRDINDHSPIFLEKQMLLEIPENSPVGAVFLLESAKDLDVGINAVKSYTISPNSHFHIKMRVNPDNRKYPELVLDKALDYEELPELSFILTALDGGSPPRSGTALVRVVVVDINDNSPEFEQAFYEVKIPENSILGSLILTVSAWDLDSGTNGEICYTLSHASEDIRKTFEINQKSGDITLTAPLDFETIESYSIIIQATDRGGLFGKSTVRIQVIDVNDNAPEITVSSITSPIPENTPETVVMVFSIQDIDSGDNGRIVCSIPEDLPFVLKSSVENYYTLETERPLDRESTAEYNITITVTDLGIPRLKTEHNTTVLVSDVNDNAPTFTQTSYTLFVSENNSPALHIGSVSATDRDSGTNAQVNYSLLPPQDPHLPLASLVSINADNGHLFALRSLDYEALQAFEFRVGATDRGSPALSSEALVRVLVLDANDNSPFVLYPLQNGSAPCTELVPRAAEPGYLVTKVVAVDGDSGQNAWLSYQLLKATEPGLFXVWAHNGEVRTARLLSERDAAKHRLVVLVKDNGEPPRSATATLHVLLVDGFSQPFLPLPEAAPAQAQTDFLTVYLVVALASVSSLFFFSVLLFVAVRLCRRSRAASVGSCSVPKGPFPGHLVDVSGTGTLSQSYQYEVCLTGGSETNEFKFLKPVIPNIQAKGLGKNSEENSTFQNSFGFNF</sequence>
<accession>Q5DRD8</accession>
<protein>
    <recommendedName>
        <fullName>Protocadherin beta-11</fullName>
        <shortName>PCDH-beta-11</shortName>
    </recommendedName>
</protein>